<keyword id="KW-0963">Cytoplasm</keyword>
<keyword id="KW-1185">Reference proteome</keyword>
<keyword id="KW-0677">Repeat</keyword>
<keyword id="KW-0802">TPR repeat</keyword>
<evidence type="ECO:0000250" key="1"/>
<evidence type="ECO:0000256" key="2">
    <source>
        <dbReference type="SAM" id="MobiDB-lite"/>
    </source>
</evidence>
<evidence type="ECO:0000269" key="3">
    <source>
    </source>
</evidence>
<organism>
    <name type="scientific">Schizosaccharomyces pombe (strain 972 / ATCC 24843)</name>
    <name type="common">Fission yeast</name>
    <dbReference type="NCBI Taxonomy" id="284812"/>
    <lineage>
        <taxon>Eukaryota</taxon>
        <taxon>Fungi</taxon>
        <taxon>Dikarya</taxon>
        <taxon>Ascomycota</taxon>
        <taxon>Taphrinomycotina</taxon>
        <taxon>Schizosaccharomycetes</taxon>
        <taxon>Schizosaccharomycetales</taxon>
        <taxon>Schizosaccharomycetaceae</taxon>
        <taxon>Schizosaccharomyces</taxon>
    </lineage>
</organism>
<accession>O94474</accession>
<sequence>MAKPALKAAKEALVVKNYELAIEQSKKALSFDANNYNANVFLGVAYFSTKQLSESKEAYLDAIKIDEKAVLAWQGLWNLYESTHDISELHKITPILASKFLELEEQNKCLNTVNKYMEVVKKYGNKADEFKALKLLTPEEGEIYEYLEGRVLPLQTVYMQMVDIQESMDRCYFESEVNKRKTRLGARLEQVMRDVELEIYKDSPLETLYNQIINYAETDEIRRLTESKLLHMYNKLLILSEIKEKSHWRERIWDLIQGMVTLHIPEQAAWTIYFEWQDHSDISFFQSAELQEYIELFPGSPLAQALFAFRNSDLWHKEHPIQLEDSNNSAELAKETKEEDDSENSVDKKENEEDIISSTMMPQDEVLANLTEAYENAPQSTIISECLAKYYIHLKEYEYAIGLSKAALEVLKRLQQDTGVKLDKLTRIFQLCLAIGYSHYEVPRYLFQAMHYYDILLAADPRNYHALLGKGLVQIENEQYSDAVKTLGLLLDDHENDPSLSELSWCYFKTGNLPKAISTVEKCLDVLLSMDVERFKIAEAYYRYGIYILNRKSENYLEDSFSAFVSSLRKDPNYAPAYTSLGLYYRDIHDMVRATKCFQKAFELDASQVEAAEALAKTFAEANEWELVEVISRRVLNTSENDLKRKKKFNWHHTSLGVLELNAKNFHKAIVHFQSALRISPKDTNAWSGLGEAYARSGRYVSALKAFNRASILDPDDWYVKYFIATLEKDMGEYEVAVSTLSEILAVRSKELCVQVSLAETYVRLAKLYHARGFYSRAADSLEKSIQICCNVLKEDITSIFSWEILGDACLSFCQLKNYHNRFPNSLISDILFTTEAMKCANNGRQFENMIYLPDLETSSGAIFIAAVAITCFTIHLSLVADDKLLLPVSWYNLGSSYYRFYECDTTKDATLQVAINCIKQAIKLEAKNYVFWNMLGVLFSQTKAVRSAQHCYIQSLLLNERSSGVWANYGALCIQNHDVECANAAFTRSISIDPDNSQAWLGKAYCSIAVGSIRKAVQIIHHAFEISSGKMPDVNYWYADTMLHAVNTEDFVTTDGDIWSATYAIKRYLGENPTDTFAYYIKASLLEHLGETTDSVPSAIRLCELLEQEYDVSESPVILKRFIDAKALLGRLYLAKKSFENSVEQAGIALDLLEGEEDEDIKRTTLGLNLTCGTASFFLNKLEKSLDCFEKALLVSDSNADVVVLVSKVLWALGSENGKQAAREQLFEALEQSPSHIGSLLCLGAIAIYDEDDAVCSAIEDSIAHLKKDEVLRSGALKQVQIMEVLLTKKIDESMIKSLLQRFLHVYPFAASSWTLLTNRYASKSLANAFATTLYTHPSRPDDLAQSYRLQNSIDRAQVAIHLVPWDSANWKALHGVTHEALVSSDAS</sequence>
<reference key="1">
    <citation type="journal article" date="2002" name="Nature">
        <title>The genome sequence of Schizosaccharomyces pombe.</title>
        <authorList>
            <person name="Wood V."/>
            <person name="Gwilliam R."/>
            <person name="Rajandream M.A."/>
            <person name="Lyne M.H."/>
            <person name="Lyne R."/>
            <person name="Stewart A."/>
            <person name="Sgouros J.G."/>
            <person name="Peat N."/>
            <person name="Hayles J."/>
            <person name="Baker S.G."/>
            <person name="Basham D."/>
            <person name="Bowman S."/>
            <person name="Brooks K."/>
            <person name="Brown D."/>
            <person name="Brown S."/>
            <person name="Chillingworth T."/>
            <person name="Churcher C.M."/>
            <person name="Collins M."/>
            <person name="Connor R."/>
            <person name="Cronin A."/>
            <person name="Davis P."/>
            <person name="Feltwell T."/>
            <person name="Fraser A."/>
            <person name="Gentles S."/>
            <person name="Goble A."/>
            <person name="Hamlin N."/>
            <person name="Harris D.E."/>
            <person name="Hidalgo J."/>
            <person name="Hodgson G."/>
            <person name="Holroyd S."/>
            <person name="Hornsby T."/>
            <person name="Howarth S."/>
            <person name="Huckle E.J."/>
            <person name="Hunt S."/>
            <person name="Jagels K."/>
            <person name="James K.D."/>
            <person name="Jones L."/>
            <person name="Jones M."/>
            <person name="Leather S."/>
            <person name="McDonald S."/>
            <person name="McLean J."/>
            <person name="Mooney P."/>
            <person name="Moule S."/>
            <person name="Mungall K.L."/>
            <person name="Murphy L.D."/>
            <person name="Niblett D."/>
            <person name="Odell C."/>
            <person name="Oliver K."/>
            <person name="O'Neil S."/>
            <person name="Pearson D."/>
            <person name="Quail M.A."/>
            <person name="Rabbinowitsch E."/>
            <person name="Rutherford K.M."/>
            <person name="Rutter S."/>
            <person name="Saunders D."/>
            <person name="Seeger K."/>
            <person name="Sharp S."/>
            <person name="Skelton J."/>
            <person name="Simmonds M.N."/>
            <person name="Squares R."/>
            <person name="Squares S."/>
            <person name="Stevens K."/>
            <person name="Taylor K."/>
            <person name="Taylor R.G."/>
            <person name="Tivey A."/>
            <person name="Walsh S.V."/>
            <person name="Warren T."/>
            <person name="Whitehead S."/>
            <person name="Woodward J.R."/>
            <person name="Volckaert G."/>
            <person name="Aert R."/>
            <person name="Robben J."/>
            <person name="Grymonprez B."/>
            <person name="Weltjens I."/>
            <person name="Vanstreels E."/>
            <person name="Rieger M."/>
            <person name="Schaefer M."/>
            <person name="Mueller-Auer S."/>
            <person name="Gabel C."/>
            <person name="Fuchs M."/>
            <person name="Duesterhoeft A."/>
            <person name="Fritzc C."/>
            <person name="Holzer E."/>
            <person name="Moestl D."/>
            <person name="Hilbert H."/>
            <person name="Borzym K."/>
            <person name="Langer I."/>
            <person name="Beck A."/>
            <person name="Lehrach H."/>
            <person name="Reinhardt R."/>
            <person name="Pohl T.M."/>
            <person name="Eger P."/>
            <person name="Zimmermann W."/>
            <person name="Wedler H."/>
            <person name="Wambutt R."/>
            <person name="Purnelle B."/>
            <person name="Goffeau A."/>
            <person name="Cadieu E."/>
            <person name="Dreano S."/>
            <person name="Gloux S."/>
            <person name="Lelaure V."/>
            <person name="Mottier S."/>
            <person name="Galibert F."/>
            <person name="Aves S.J."/>
            <person name="Xiang Z."/>
            <person name="Hunt C."/>
            <person name="Moore K."/>
            <person name="Hurst S.M."/>
            <person name="Lucas M."/>
            <person name="Rochet M."/>
            <person name="Gaillardin C."/>
            <person name="Tallada V.A."/>
            <person name="Garzon A."/>
            <person name="Thode G."/>
            <person name="Daga R.R."/>
            <person name="Cruzado L."/>
            <person name="Jimenez J."/>
            <person name="Sanchez M."/>
            <person name="del Rey F."/>
            <person name="Benito J."/>
            <person name="Dominguez A."/>
            <person name="Revuelta J.L."/>
            <person name="Moreno S."/>
            <person name="Armstrong J."/>
            <person name="Forsburg S.L."/>
            <person name="Cerutti L."/>
            <person name="Lowe T."/>
            <person name="McCombie W.R."/>
            <person name="Paulsen I."/>
            <person name="Potashkin J."/>
            <person name="Shpakovski G.V."/>
            <person name="Ussery D."/>
            <person name="Barrell B.G."/>
            <person name="Nurse P."/>
        </authorList>
    </citation>
    <scope>NUCLEOTIDE SEQUENCE [LARGE SCALE GENOMIC DNA]</scope>
    <source>
        <strain>972 / ATCC 24843</strain>
    </source>
</reference>
<reference key="2">
    <citation type="journal article" date="2006" name="Nat. Biotechnol.">
        <title>ORFeome cloning and global analysis of protein localization in the fission yeast Schizosaccharomyces pombe.</title>
        <authorList>
            <person name="Matsuyama A."/>
            <person name="Arai R."/>
            <person name="Yashiroda Y."/>
            <person name="Shirai A."/>
            <person name="Kamata A."/>
            <person name="Sekido S."/>
            <person name="Kobayashi Y."/>
            <person name="Hashimoto A."/>
            <person name="Hamamoto M."/>
            <person name="Hiraoka Y."/>
            <person name="Horinouchi S."/>
            <person name="Yoshida M."/>
        </authorList>
    </citation>
    <scope>SUBCELLULAR LOCATION [LARGE SCALE ANALYSIS]</scope>
</reference>
<comment type="function">
    <text evidence="1">Component of the SKI complex involved in 3'-mRNA degradation pathway.</text>
</comment>
<comment type="subunit">
    <text evidence="1">Component of the SKI complex composed of at least ski2, ski3 and ski8. The SKI complex interacts with ski7, which makes the link between the SKI complex and the exosome in order to perform mRNA degradation (By similarity).</text>
</comment>
<comment type="subcellular location">
    <subcellularLocation>
        <location evidence="3">Cytoplasm</location>
    </subcellularLocation>
</comment>
<name>SKI3_SCHPO</name>
<proteinExistence type="inferred from homology"/>
<gene>
    <name type="primary">ski3</name>
    <name type="ORF">SPCC1919.05</name>
</gene>
<dbReference type="EMBL" id="CU329672">
    <property type="protein sequence ID" value="CAA22636.1"/>
    <property type="molecule type" value="Genomic_DNA"/>
</dbReference>
<dbReference type="PIR" id="T41230">
    <property type="entry name" value="T41230"/>
</dbReference>
<dbReference type="RefSeq" id="NP_588487.1">
    <property type="nucleotide sequence ID" value="NM_001023478.2"/>
</dbReference>
<dbReference type="SMR" id="O94474"/>
<dbReference type="BioGRID" id="275708">
    <property type="interactions" value="73"/>
</dbReference>
<dbReference type="FunCoup" id="O94474">
    <property type="interactions" value="310"/>
</dbReference>
<dbReference type="STRING" id="284812.O94474"/>
<dbReference type="iPTMnet" id="O94474"/>
<dbReference type="PaxDb" id="4896-SPCC1919.05.1"/>
<dbReference type="EnsemblFungi" id="SPCC1919.05.1">
    <property type="protein sequence ID" value="SPCC1919.05.1:pep"/>
    <property type="gene ID" value="SPCC1919.05"/>
</dbReference>
<dbReference type="GeneID" id="2539136"/>
<dbReference type="KEGG" id="spo:2539136"/>
<dbReference type="PomBase" id="SPCC1919.05">
    <property type="gene designation" value="ski3"/>
</dbReference>
<dbReference type="VEuPathDB" id="FungiDB:SPCC1919.05"/>
<dbReference type="eggNOG" id="KOG1127">
    <property type="taxonomic scope" value="Eukaryota"/>
</dbReference>
<dbReference type="HOGENOM" id="CLU_001688_2_0_1"/>
<dbReference type="InParanoid" id="O94474"/>
<dbReference type="OMA" id="CQWELDP"/>
<dbReference type="PhylomeDB" id="O94474"/>
<dbReference type="Reactome" id="R-SPO-429958">
    <property type="pathway name" value="mRNA decay by 3' to 5' exoribonuclease"/>
</dbReference>
<dbReference type="PRO" id="PR:O94474"/>
<dbReference type="Proteomes" id="UP000002485">
    <property type="component" value="Chromosome III"/>
</dbReference>
<dbReference type="GO" id="GO:0005829">
    <property type="term" value="C:cytosol"/>
    <property type="evidence" value="ECO:0007005"/>
    <property type="project" value="PomBase"/>
</dbReference>
<dbReference type="GO" id="GO:0055087">
    <property type="term" value="C:Ski complex"/>
    <property type="evidence" value="ECO:0000318"/>
    <property type="project" value="GO_Central"/>
</dbReference>
<dbReference type="GO" id="GO:0000956">
    <property type="term" value="P:nuclear-transcribed mRNA catabolic process"/>
    <property type="evidence" value="ECO:0000318"/>
    <property type="project" value="GO_Central"/>
</dbReference>
<dbReference type="GO" id="GO:0070478">
    <property type="term" value="P:nuclear-transcribed mRNA catabolic process, 3'-5' exonucleolytic nonsense-mediated decay"/>
    <property type="evidence" value="ECO:0000266"/>
    <property type="project" value="PomBase"/>
</dbReference>
<dbReference type="GO" id="GO:0070481">
    <property type="term" value="P:nuclear-transcribed mRNA catabolic process, non-stop decay"/>
    <property type="evidence" value="ECO:0000266"/>
    <property type="project" value="PomBase"/>
</dbReference>
<dbReference type="Gene3D" id="1.25.40.10">
    <property type="entry name" value="Tetratricopeptide repeat domain"/>
    <property type="match status" value="5"/>
</dbReference>
<dbReference type="InterPro" id="IPR039226">
    <property type="entry name" value="Ski3/TTC37"/>
</dbReference>
<dbReference type="InterPro" id="IPR011990">
    <property type="entry name" value="TPR-like_helical_dom_sf"/>
</dbReference>
<dbReference type="InterPro" id="IPR040962">
    <property type="entry name" value="TPR_22"/>
</dbReference>
<dbReference type="InterPro" id="IPR019734">
    <property type="entry name" value="TPR_rpt"/>
</dbReference>
<dbReference type="PANTHER" id="PTHR15704">
    <property type="entry name" value="SUPERKILLER 3 PROTEIN-RELATED"/>
    <property type="match status" value="1"/>
</dbReference>
<dbReference type="PANTHER" id="PTHR15704:SF7">
    <property type="entry name" value="SUPERKILLER COMPLEX PROTEIN 3"/>
    <property type="match status" value="1"/>
</dbReference>
<dbReference type="Pfam" id="PF13374">
    <property type="entry name" value="TPR_10"/>
    <property type="match status" value="1"/>
</dbReference>
<dbReference type="Pfam" id="PF14559">
    <property type="entry name" value="TPR_19"/>
    <property type="match status" value="1"/>
</dbReference>
<dbReference type="Pfam" id="PF18833">
    <property type="entry name" value="TPR_22"/>
    <property type="match status" value="1"/>
</dbReference>
<dbReference type="Pfam" id="PF13181">
    <property type="entry name" value="TPR_8"/>
    <property type="match status" value="1"/>
</dbReference>
<dbReference type="SMART" id="SM00028">
    <property type="entry name" value="TPR"/>
    <property type="match status" value="14"/>
</dbReference>
<dbReference type="SUPFAM" id="SSF48452">
    <property type="entry name" value="TPR-like"/>
    <property type="match status" value="5"/>
</dbReference>
<dbReference type="PROSITE" id="PS50005">
    <property type="entry name" value="TPR"/>
    <property type="match status" value="13"/>
</dbReference>
<dbReference type="PROSITE" id="PS50293">
    <property type="entry name" value="TPR_REGION"/>
    <property type="match status" value="5"/>
</dbReference>
<feature type="chain" id="PRO_0000311765" description="Superkiller protein 3">
    <location>
        <begin position="1"/>
        <end position="1389"/>
    </location>
</feature>
<feature type="repeat" description="TPR 1">
    <location>
        <begin position="2"/>
        <end position="35"/>
    </location>
</feature>
<feature type="repeat" description="TPR 2">
    <location>
        <begin position="36"/>
        <end position="69"/>
    </location>
</feature>
<feature type="repeat" description="TPR 3">
    <location>
        <begin position="90"/>
        <end position="123"/>
    </location>
</feature>
<feature type="repeat" description="TPR 4">
    <location>
        <begin position="381"/>
        <end position="414"/>
    </location>
</feature>
<feature type="repeat" description="TPR 5">
    <location>
        <begin position="429"/>
        <end position="463"/>
    </location>
</feature>
<feature type="repeat" description="TPR 6">
    <location>
        <begin position="465"/>
        <end position="497"/>
    </location>
</feature>
<feature type="repeat" description="TPR 7">
    <location>
        <begin position="498"/>
        <end position="530"/>
    </location>
</feature>
<feature type="repeat" description="TPR 8">
    <location>
        <begin position="538"/>
        <end position="574"/>
    </location>
</feature>
<feature type="repeat" description="TPR 9">
    <location>
        <begin position="575"/>
        <end position="608"/>
    </location>
</feature>
<feature type="repeat" description="TPR 10">
    <location>
        <begin position="650"/>
        <end position="683"/>
    </location>
</feature>
<feature type="repeat" description="TPR 11">
    <location>
        <begin position="684"/>
        <end position="717"/>
    </location>
</feature>
<feature type="repeat" description="TPR 12">
    <location>
        <begin position="719"/>
        <end position="751"/>
    </location>
</feature>
<feature type="repeat" description="TPR 13">
    <location>
        <begin position="759"/>
        <end position="792"/>
    </location>
</feature>
<feature type="repeat" description="TPR 14">
    <location>
        <begin position="931"/>
        <end position="963"/>
    </location>
</feature>
<feature type="repeat" description="TPR 15">
    <location>
        <begin position="964"/>
        <end position="997"/>
    </location>
</feature>
<feature type="repeat" description="TPR 16">
    <location>
        <begin position="999"/>
        <end position="1031"/>
    </location>
</feature>
<feature type="repeat" description="TPR 17">
    <location>
        <begin position="1124"/>
        <end position="1157"/>
    </location>
</feature>
<feature type="repeat" description="TPR 18">
    <location>
        <begin position="1167"/>
        <end position="1200"/>
    </location>
</feature>
<feature type="region of interest" description="Disordered" evidence="2">
    <location>
        <begin position="326"/>
        <end position="355"/>
    </location>
</feature>
<protein>
    <recommendedName>
        <fullName>Superkiller protein 3</fullName>
    </recommendedName>
</protein>